<dbReference type="EMBL" id="AF028726">
    <property type="protein sequence ID" value="AAC38990.1"/>
    <property type="molecule type" value="Genomic_DNA"/>
</dbReference>
<dbReference type="EMBL" id="AF028726">
    <property type="protein sequence ID" value="AAC38991.1"/>
    <property type="molecule type" value="Genomic_DNA"/>
</dbReference>
<dbReference type="EMBL" id="AF028726">
    <property type="protein sequence ID" value="AAC38992.1"/>
    <property type="molecule type" value="Genomic_DNA"/>
</dbReference>
<dbReference type="EMBL" id="AF028726">
    <property type="protein sequence ID" value="AAC38993.1"/>
    <property type="molecule type" value="Genomic_DNA"/>
</dbReference>
<dbReference type="PDB" id="5Y70">
    <property type="method" value="NMR"/>
    <property type="chains" value="A=1-92"/>
</dbReference>
<dbReference type="PDBsum" id="5Y70"/>
<dbReference type="SMR" id="P69300"/>
<dbReference type="OMA" id="HFKHKFA"/>
<dbReference type="GO" id="GO:0005930">
    <property type="term" value="C:axoneme"/>
    <property type="evidence" value="ECO:0000314"/>
    <property type="project" value="GeneDB"/>
</dbReference>
<dbReference type="GO" id="GO:0051286">
    <property type="term" value="C:cell tip"/>
    <property type="evidence" value="ECO:0000314"/>
    <property type="project" value="GeneDB"/>
</dbReference>
<dbReference type="GO" id="GO:0036064">
    <property type="term" value="C:ciliary basal body"/>
    <property type="evidence" value="ECO:0000314"/>
    <property type="project" value="GeneDB"/>
</dbReference>
<dbReference type="GO" id="GO:0005929">
    <property type="term" value="C:cilium"/>
    <property type="evidence" value="ECO:0000314"/>
    <property type="project" value="GeneDB"/>
</dbReference>
<dbReference type="GO" id="GO:0005856">
    <property type="term" value="C:cytoskeleton"/>
    <property type="evidence" value="ECO:0000314"/>
    <property type="project" value="GeneDB"/>
</dbReference>
<dbReference type="GO" id="GO:0120119">
    <property type="term" value="C:flagellum attachment zone"/>
    <property type="evidence" value="ECO:0000314"/>
    <property type="project" value="GeneDB"/>
</dbReference>
<dbReference type="GO" id="GO:0005874">
    <property type="term" value="C:microtubule"/>
    <property type="evidence" value="ECO:0007669"/>
    <property type="project" value="UniProtKB-KW"/>
</dbReference>
<dbReference type="GO" id="GO:0015630">
    <property type="term" value="C:microtubule cytoskeleton"/>
    <property type="evidence" value="ECO:0000250"/>
    <property type="project" value="UniProtKB"/>
</dbReference>
<dbReference type="GO" id="GO:0032053">
    <property type="term" value="P:ciliary basal body organization"/>
    <property type="evidence" value="ECO:0000315"/>
    <property type="project" value="GeneDB"/>
</dbReference>
<dbReference type="GO" id="GO:0007010">
    <property type="term" value="P:cytoskeleton organization"/>
    <property type="evidence" value="ECO:0000250"/>
    <property type="project" value="UniProtKB"/>
</dbReference>
<dbReference type="GO" id="GO:0006952">
    <property type="term" value="P:defense response"/>
    <property type="evidence" value="ECO:0007669"/>
    <property type="project" value="InterPro"/>
</dbReference>
<dbReference type="GO" id="GO:0008284">
    <property type="term" value="P:positive regulation of cell population proliferation"/>
    <property type="evidence" value="ECO:0007669"/>
    <property type="project" value="InterPro"/>
</dbReference>
<dbReference type="InterPro" id="IPR004132">
    <property type="entry name" value="KMP11"/>
</dbReference>
<dbReference type="Pfam" id="PF03037">
    <property type="entry name" value="KMP11"/>
    <property type="match status" value="1"/>
</dbReference>
<accession>P69300</accession>
<accession>Q26773</accession>
<gene>
    <name type="primary">KMP-11/1</name>
</gene>
<gene>
    <name type="primary">KMP-11/2</name>
</gene>
<gene>
    <name type="primary">KMP-11/3</name>
</gene>
<gene>
    <name type="primary">KMP-11/4</name>
</gene>
<feature type="chain" id="PRO_0000205715" description="Kinetoplastid membrane protein 11">
    <location>
        <begin position="1"/>
        <end position="92"/>
    </location>
</feature>
<feature type="helix" evidence="4">
    <location>
        <begin position="3"/>
        <end position="12"/>
    </location>
</feature>
<feature type="turn" evidence="4">
    <location>
        <begin position="13"/>
        <end position="15"/>
    </location>
</feature>
<feature type="helix" evidence="4">
    <location>
        <begin position="18"/>
        <end position="23"/>
    </location>
</feature>
<feature type="helix" evidence="4">
    <location>
        <begin position="24"/>
        <end position="27"/>
    </location>
</feature>
<feature type="helix" evidence="4">
    <location>
        <begin position="28"/>
        <end position="31"/>
    </location>
</feature>
<feature type="helix" evidence="4">
    <location>
        <begin position="43"/>
        <end position="47"/>
    </location>
</feature>
<feature type="helix" evidence="4">
    <location>
        <begin position="49"/>
        <end position="55"/>
    </location>
</feature>
<feature type="turn" evidence="4">
    <location>
        <begin position="56"/>
        <end position="58"/>
    </location>
</feature>
<feature type="helix" evidence="4">
    <location>
        <begin position="59"/>
        <end position="65"/>
    </location>
</feature>
<feature type="helix" evidence="4">
    <location>
        <begin position="66"/>
        <end position="68"/>
    </location>
</feature>
<feature type="helix" evidence="4">
    <location>
        <begin position="70"/>
        <end position="87"/>
    </location>
</feature>
<organism>
    <name type="scientific">Trypanosoma brucei brucei</name>
    <dbReference type="NCBI Taxonomy" id="5702"/>
    <lineage>
        <taxon>Eukaryota</taxon>
        <taxon>Discoba</taxon>
        <taxon>Euglenozoa</taxon>
        <taxon>Kinetoplastea</taxon>
        <taxon>Metakinetoplastina</taxon>
        <taxon>Trypanosomatida</taxon>
        <taxon>Trypanosomatidae</taxon>
        <taxon>Trypanosoma</taxon>
    </lineage>
</organism>
<protein>
    <recommendedName>
        <fullName>Kinetoplastid membrane protein 11</fullName>
        <shortName>KMP-11</shortName>
    </recommendedName>
</protein>
<keyword id="KW-0002">3D-structure</keyword>
<keyword id="KW-0963">Cytoplasm</keyword>
<keyword id="KW-0206">Cytoskeleton</keyword>
<keyword id="KW-0493">Microtubule</keyword>
<sequence>MATTYEEFAAKLDRLDAEFAKKMEEQNKRFFADKPDEATLSPEMKEHYEKFEKMIQEHTDKFNKKMREHSEHFKAKFAELLEQQKNAQFPGK</sequence>
<name>KM11_TRYBB</name>
<evidence type="ECO:0000250" key="1"/>
<evidence type="ECO:0000269" key="2">
    <source>
    </source>
</evidence>
<evidence type="ECO:0000305" key="3"/>
<evidence type="ECO:0007829" key="4">
    <source>
        <dbReference type="PDB" id="5Y70"/>
    </source>
</evidence>
<reference key="1">
    <citation type="journal article" date="1998" name="Mol. Biochem. Parasitol.">
        <title>Cloning and characterization of the kinetoplastid membrane protein-11 gene locus of Trypanosoma brucei.</title>
        <authorList>
            <person name="Bridge M.A."/>
            <person name="Zhou Q."/>
            <person name="Koop B.F."/>
            <person name="Pearson T.W."/>
        </authorList>
    </citation>
    <scope>NUCLEOTIDE SEQUENCE [GENOMIC DNA]</scope>
</reference>
<reference key="2">
    <citation type="journal article" date="1995" name="Mol. Biochem. Parasitol.">
        <title>Kinetoplastid membrane protein-11 (KMP-11) is differentially expressed during the life cycle of African trypanosomes and is found in a wide variety of kinetoplastid parasites.</title>
        <authorList>
            <person name="Stebeck C.E."/>
            <person name="Beecroft R.P."/>
            <person name="Singh B.N."/>
            <person name="Jardim A."/>
            <person name="Olafson R.W."/>
            <person name="Tuckey C."/>
            <person name="Prenevost K.D."/>
            <person name="Pearson T.W."/>
        </authorList>
    </citation>
    <scope>SUBCELLULAR LOCATION</scope>
</reference>
<comment type="function">
    <text evidence="1">May be involved in the regulation of the cytoskeleton through interaction with the subpellicular microtubules. May be involved in parasite mobility and attachment to the surface of the host cell. Behaves as a strong immunogen during infection (By similarity).</text>
</comment>
<comment type="subunit">
    <text evidence="1">Monomer.</text>
</comment>
<comment type="subcellular location">
    <subcellularLocation>
        <location evidence="2">Cytoplasm</location>
        <location evidence="2">Cytoskeleton</location>
    </subcellularLocation>
    <text>Associated with microtubules.</text>
</comment>
<comment type="miscellaneous">
    <text>There are four copies of the KMP-11 gene in T.b.brucei.</text>
</comment>
<comment type="similarity">
    <text evidence="3">Belongs to the KMP-11 family.</text>
</comment>
<proteinExistence type="evidence at protein level"/>